<name>PUR9_PROMP</name>
<dbReference type="EC" id="2.1.2.3" evidence="1"/>
<dbReference type="EC" id="3.5.4.10" evidence="1"/>
<dbReference type="EMBL" id="BX548174">
    <property type="protein sequence ID" value="CAE18725.1"/>
    <property type="molecule type" value="Genomic_DNA"/>
</dbReference>
<dbReference type="RefSeq" id="WP_011131903.1">
    <property type="nucleotide sequence ID" value="NC_005072.1"/>
</dbReference>
<dbReference type="SMR" id="Q7TUG1"/>
<dbReference type="STRING" id="59919.PMM0266"/>
<dbReference type="KEGG" id="pmm:PMM0266"/>
<dbReference type="eggNOG" id="COG0138">
    <property type="taxonomic scope" value="Bacteria"/>
</dbReference>
<dbReference type="HOGENOM" id="CLU_016316_5_2_3"/>
<dbReference type="OrthoDB" id="9802065at2"/>
<dbReference type="UniPathway" id="UPA00074">
    <property type="reaction ID" value="UER00133"/>
</dbReference>
<dbReference type="UniPathway" id="UPA00074">
    <property type="reaction ID" value="UER00135"/>
</dbReference>
<dbReference type="Proteomes" id="UP000001026">
    <property type="component" value="Chromosome"/>
</dbReference>
<dbReference type="GO" id="GO:0005829">
    <property type="term" value="C:cytosol"/>
    <property type="evidence" value="ECO:0007669"/>
    <property type="project" value="TreeGrafter"/>
</dbReference>
<dbReference type="GO" id="GO:0003937">
    <property type="term" value="F:IMP cyclohydrolase activity"/>
    <property type="evidence" value="ECO:0007669"/>
    <property type="project" value="UniProtKB-UniRule"/>
</dbReference>
<dbReference type="GO" id="GO:0004643">
    <property type="term" value="F:phosphoribosylaminoimidazolecarboxamide formyltransferase activity"/>
    <property type="evidence" value="ECO:0007669"/>
    <property type="project" value="UniProtKB-UniRule"/>
</dbReference>
<dbReference type="GO" id="GO:0006189">
    <property type="term" value="P:'de novo' IMP biosynthetic process"/>
    <property type="evidence" value="ECO:0007669"/>
    <property type="project" value="UniProtKB-UniRule"/>
</dbReference>
<dbReference type="CDD" id="cd01421">
    <property type="entry name" value="IMPCH"/>
    <property type="match status" value="1"/>
</dbReference>
<dbReference type="FunFam" id="3.40.140.20:FF:000001">
    <property type="entry name" value="Bifunctional purine biosynthesis protein PurH"/>
    <property type="match status" value="1"/>
</dbReference>
<dbReference type="FunFam" id="3.40.50.1380:FF:000001">
    <property type="entry name" value="Bifunctional purine biosynthesis protein PurH"/>
    <property type="match status" value="1"/>
</dbReference>
<dbReference type="Gene3D" id="3.40.140.20">
    <property type="match status" value="2"/>
</dbReference>
<dbReference type="Gene3D" id="3.40.50.1380">
    <property type="entry name" value="Methylglyoxal synthase-like domain"/>
    <property type="match status" value="1"/>
</dbReference>
<dbReference type="HAMAP" id="MF_00139">
    <property type="entry name" value="PurH"/>
    <property type="match status" value="1"/>
</dbReference>
<dbReference type="InterPro" id="IPR024051">
    <property type="entry name" value="AICAR_Tfase_dup_dom_sf"/>
</dbReference>
<dbReference type="InterPro" id="IPR016193">
    <property type="entry name" value="Cytidine_deaminase-like"/>
</dbReference>
<dbReference type="InterPro" id="IPR011607">
    <property type="entry name" value="MGS-like_dom"/>
</dbReference>
<dbReference type="InterPro" id="IPR036914">
    <property type="entry name" value="MGS-like_dom_sf"/>
</dbReference>
<dbReference type="InterPro" id="IPR002695">
    <property type="entry name" value="PurH-like"/>
</dbReference>
<dbReference type="NCBIfam" id="NF002049">
    <property type="entry name" value="PRK00881.1"/>
    <property type="match status" value="1"/>
</dbReference>
<dbReference type="NCBIfam" id="TIGR00355">
    <property type="entry name" value="purH"/>
    <property type="match status" value="1"/>
</dbReference>
<dbReference type="PANTHER" id="PTHR11692:SF0">
    <property type="entry name" value="BIFUNCTIONAL PURINE BIOSYNTHESIS PROTEIN ATIC"/>
    <property type="match status" value="1"/>
</dbReference>
<dbReference type="PANTHER" id="PTHR11692">
    <property type="entry name" value="BIFUNCTIONAL PURINE BIOSYNTHESIS PROTEIN PURH"/>
    <property type="match status" value="1"/>
</dbReference>
<dbReference type="Pfam" id="PF01808">
    <property type="entry name" value="AICARFT_IMPCHas"/>
    <property type="match status" value="1"/>
</dbReference>
<dbReference type="Pfam" id="PF02142">
    <property type="entry name" value="MGS"/>
    <property type="match status" value="1"/>
</dbReference>
<dbReference type="PIRSF" id="PIRSF000414">
    <property type="entry name" value="AICARFT_IMPCHas"/>
    <property type="match status" value="1"/>
</dbReference>
<dbReference type="SMART" id="SM00798">
    <property type="entry name" value="AICARFT_IMPCHas"/>
    <property type="match status" value="1"/>
</dbReference>
<dbReference type="SMART" id="SM00851">
    <property type="entry name" value="MGS"/>
    <property type="match status" value="1"/>
</dbReference>
<dbReference type="SUPFAM" id="SSF53927">
    <property type="entry name" value="Cytidine deaminase-like"/>
    <property type="match status" value="1"/>
</dbReference>
<dbReference type="SUPFAM" id="SSF52335">
    <property type="entry name" value="Methylglyoxal synthase-like"/>
    <property type="match status" value="1"/>
</dbReference>
<dbReference type="PROSITE" id="PS51855">
    <property type="entry name" value="MGS"/>
    <property type="match status" value="1"/>
</dbReference>
<organism>
    <name type="scientific">Prochlorococcus marinus subsp. pastoris (strain CCMP1986 / NIES-2087 / MED4)</name>
    <dbReference type="NCBI Taxonomy" id="59919"/>
    <lineage>
        <taxon>Bacteria</taxon>
        <taxon>Bacillati</taxon>
        <taxon>Cyanobacteriota</taxon>
        <taxon>Cyanophyceae</taxon>
        <taxon>Synechococcales</taxon>
        <taxon>Prochlorococcaceae</taxon>
        <taxon>Prochlorococcus</taxon>
    </lineage>
</organism>
<reference key="1">
    <citation type="journal article" date="2003" name="Nature">
        <title>Genome divergence in two Prochlorococcus ecotypes reflects oceanic niche differentiation.</title>
        <authorList>
            <person name="Rocap G."/>
            <person name="Larimer F.W."/>
            <person name="Lamerdin J.E."/>
            <person name="Malfatti S."/>
            <person name="Chain P."/>
            <person name="Ahlgren N.A."/>
            <person name="Arellano A."/>
            <person name="Coleman M."/>
            <person name="Hauser L."/>
            <person name="Hess W.R."/>
            <person name="Johnson Z.I."/>
            <person name="Land M.L."/>
            <person name="Lindell D."/>
            <person name="Post A.F."/>
            <person name="Regala W."/>
            <person name="Shah M."/>
            <person name="Shaw S.L."/>
            <person name="Steglich C."/>
            <person name="Sullivan M.B."/>
            <person name="Ting C.S."/>
            <person name="Tolonen A."/>
            <person name="Webb E.A."/>
            <person name="Zinser E.R."/>
            <person name="Chisholm S.W."/>
        </authorList>
    </citation>
    <scope>NUCLEOTIDE SEQUENCE [LARGE SCALE GENOMIC DNA]</scope>
    <source>
        <strain>CCMP1986 / NIES-2087 / MED4</strain>
    </source>
</reference>
<proteinExistence type="inferred from homology"/>
<feature type="chain" id="PRO_1000018932" description="Bifunctional purine biosynthesis protein PurH">
    <location>
        <begin position="1"/>
        <end position="517"/>
    </location>
</feature>
<feature type="domain" description="MGS-like" evidence="2">
    <location>
        <begin position="1"/>
        <end position="145"/>
    </location>
</feature>
<sequence length="517" mass="57418">MSPLALVSVSDKKNIIPFCTELVEKFNYKILSSGGTAKHLMEAKIPVIKVADFTNSPEILGGRVKTLHPKIHGGILAKRTDEEHKKDIEAYDLELIELVVVNLYPFKKTVEKGSKWEDAIENIDIGGPSMIRSAAKNHKDVSVLVDPSQYQEFIEESKKGELKETYKAKLALEAFQHTADYDTAISNWIRKERGLQSSKYIESYPLIKTLRYGENPHQKAFWYGLNNIGWNSAEQLQGKELSYNNLLDLESALSTVLEFGYEEKDELTTETFASVILKHNNPCGASIGNSASQAFLNALKCDSVSAFGGIVAFNSNVDSETAINLKDIFLECVVAPSFDPEALEILKIKKNLRILKFSKDQIPNKNQTSTKSIMGGLLVQDTDNIEEKTESWITVTKKFPSTQDYLDLSFAWKICKHIKSNAIVIAKDQQTLGIGAGQMNRVGASKIALQAAKENGYGGVLASDGFFPFADTVELANEYGINSIIQPGGSIRDEESIEMCNLKGISMVFTNKRHFLH</sequence>
<accession>Q7TUG1</accession>
<protein>
    <recommendedName>
        <fullName evidence="1">Bifunctional purine biosynthesis protein PurH</fullName>
    </recommendedName>
    <domain>
        <recommendedName>
            <fullName evidence="1">Phosphoribosylaminoimidazolecarboxamide formyltransferase</fullName>
            <ecNumber evidence="1">2.1.2.3</ecNumber>
        </recommendedName>
        <alternativeName>
            <fullName evidence="1">AICAR transformylase</fullName>
        </alternativeName>
    </domain>
    <domain>
        <recommendedName>
            <fullName evidence="1">IMP cyclohydrolase</fullName>
            <ecNumber evidence="1">3.5.4.10</ecNumber>
        </recommendedName>
        <alternativeName>
            <fullName evidence="1">ATIC</fullName>
        </alternativeName>
        <alternativeName>
            <fullName evidence="1">IMP synthase</fullName>
        </alternativeName>
        <alternativeName>
            <fullName evidence="1">Inosinicase</fullName>
        </alternativeName>
    </domain>
</protein>
<gene>
    <name evidence="1" type="primary">purH</name>
    <name type="ordered locus">PMM0266</name>
</gene>
<keyword id="KW-0378">Hydrolase</keyword>
<keyword id="KW-0511">Multifunctional enzyme</keyword>
<keyword id="KW-0658">Purine biosynthesis</keyword>
<keyword id="KW-0808">Transferase</keyword>
<comment type="catalytic activity">
    <reaction evidence="1">
        <text>(6R)-10-formyltetrahydrofolate + 5-amino-1-(5-phospho-beta-D-ribosyl)imidazole-4-carboxamide = 5-formamido-1-(5-phospho-D-ribosyl)imidazole-4-carboxamide + (6S)-5,6,7,8-tetrahydrofolate</text>
        <dbReference type="Rhea" id="RHEA:22192"/>
        <dbReference type="ChEBI" id="CHEBI:57453"/>
        <dbReference type="ChEBI" id="CHEBI:58467"/>
        <dbReference type="ChEBI" id="CHEBI:58475"/>
        <dbReference type="ChEBI" id="CHEBI:195366"/>
        <dbReference type="EC" id="2.1.2.3"/>
    </reaction>
</comment>
<comment type="catalytic activity">
    <reaction evidence="1">
        <text>IMP + H2O = 5-formamido-1-(5-phospho-D-ribosyl)imidazole-4-carboxamide</text>
        <dbReference type="Rhea" id="RHEA:18445"/>
        <dbReference type="ChEBI" id="CHEBI:15377"/>
        <dbReference type="ChEBI" id="CHEBI:58053"/>
        <dbReference type="ChEBI" id="CHEBI:58467"/>
        <dbReference type="EC" id="3.5.4.10"/>
    </reaction>
</comment>
<comment type="pathway">
    <text evidence="1">Purine metabolism; IMP biosynthesis via de novo pathway; 5-formamido-1-(5-phospho-D-ribosyl)imidazole-4-carboxamide from 5-amino-1-(5-phospho-D-ribosyl)imidazole-4-carboxamide (10-formyl THF route): step 1/1.</text>
</comment>
<comment type="pathway">
    <text evidence="1">Purine metabolism; IMP biosynthesis via de novo pathway; IMP from 5-formamido-1-(5-phospho-D-ribosyl)imidazole-4-carboxamide: step 1/1.</text>
</comment>
<comment type="domain">
    <text evidence="1">The IMP cyclohydrolase activity resides in the N-terminal region.</text>
</comment>
<comment type="similarity">
    <text evidence="1">Belongs to the PurH family.</text>
</comment>
<evidence type="ECO:0000255" key="1">
    <source>
        <dbReference type="HAMAP-Rule" id="MF_00139"/>
    </source>
</evidence>
<evidence type="ECO:0000255" key="2">
    <source>
        <dbReference type="PROSITE-ProRule" id="PRU01202"/>
    </source>
</evidence>